<organism>
    <name type="scientific">Columba livia</name>
    <name type="common">Rock dove</name>
    <dbReference type="NCBI Taxonomy" id="8932"/>
    <lineage>
        <taxon>Eukaryota</taxon>
        <taxon>Metazoa</taxon>
        <taxon>Chordata</taxon>
        <taxon>Craniata</taxon>
        <taxon>Vertebrata</taxon>
        <taxon>Euteleostomi</taxon>
        <taxon>Archelosauria</taxon>
        <taxon>Archosauria</taxon>
        <taxon>Dinosauria</taxon>
        <taxon>Saurischia</taxon>
        <taxon>Theropoda</taxon>
        <taxon>Coelurosauria</taxon>
        <taxon>Aves</taxon>
        <taxon>Neognathae</taxon>
        <taxon>Neoaves</taxon>
        <taxon>Columbimorphae</taxon>
        <taxon>Columbiformes</taxon>
        <taxon>Columbidae</taxon>
        <taxon>Columba</taxon>
    </lineage>
</organism>
<proteinExistence type="evidence at protein level"/>
<keyword id="KW-0067">ATP-binding</keyword>
<keyword id="KW-0903">Direct protein sequencing</keyword>
<keyword id="KW-0436">Ligase</keyword>
<keyword id="KW-0460">Magnesium</keyword>
<keyword id="KW-0479">Metal-binding</keyword>
<keyword id="KW-0496">Mitochondrion</keyword>
<keyword id="KW-0547">Nucleotide-binding</keyword>
<keyword id="KW-0809">Transit peptide</keyword>
<keyword id="KW-0816">Tricarboxylic acid cycle</keyword>
<name>SUCB1_COLLI</name>
<accession>Q9YI37</accession>
<gene>
    <name evidence="2" type="primary">SUCLA2</name>
</gene>
<sequence>RRLSLHEYLSMGLLQEAGISVPHGVVARTPDEAYKIAKEIGSKDLVIKAQVLAGGRGKGTFEGGLKGGVKIVFSPEEAKAVSSRMIGKKLFTKQTGEKGRICNQVFVCERRYPRREYYFAITMERSFQGPVLIGSSQGGVNIEDVAAENPDAIIKEPIDIVEGIKKEQAVRLAQKMGFPSNLVDEAAENMIKLYNLFLKYDATMIEINPMVEDASGVVMCMDAKINFDSNSAYRQKKIFDMQDWTQEDERDRQAAKADLNYIGLDGNIGCLVNGAGLAMATMDIIKLHGGTPANFLDVGGGATVHQVTEAFKLITSDKKVLAILVNIFGGIMRCDVIAQGIVVAVKDLDLKIPVVVRLQGTRVDDAKALITASGLKILACDDLDEAAKMVVKLSEIVTLAKQAHLDVKFQLPI</sequence>
<reference key="1">
    <citation type="journal article" date="1998" name="J. Biol. Chem.">
        <title>Genetic evidence for the expression of ATP- and GTP-specific succinyl-CoA synthetases in multicellular eucaryotes.</title>
        <authorList>
            <person name="Johnson J.D."/>
            <person name="Mehus J.G."/>
            <person name="Tews K."/>
            <person name="Milavetz B.I."/>
            <person name="Lambeth D.O."/>
        </authorList>
    </citation>
    <scope>NUCLEOTIDE SEQUENCE [MRNA]</scope>
    <scope>PROTEIN SEQUENCE OF 116-125</scope>
    <scope>TISSUE SPECIFICITY</scope>
    <source>
        <tissue>Skeletal muscle</tissue>
    </source>
</reference>
<reference key="2">
    <citation type="journal article" date="1998" name="J. Biol. Chem.">
        <title>Characterization of the ATP- and GTP-specific succinyl-CoA synthetases in pigeon. The enzymes incorporate the same alpha-subunit.</title>
        <authorList>
            <person name="Johnson J.D."/>
            <person name="Muhonen W.W."/>
            <person name="Lambeth D.O."/>
        </authorList>
    </citation>
    <scope>FUNCTION</scope>
    <scope>CATALYTIC ACTIVITY</scope>
    <scope>BIOPHYSICOCHEMICAL PROPERTIES</scope>
    <scope>PATHWAY</scope>
    <scope>SUBUNIT</scope>
    <scope>SUBCELLULAR LOCATION</scope>
</reference>
<feature type="transit peptide" description="Mitochondrion" evidence="1">
    <location>
        <begin position="1" status="less than"/>
        <end position="2"/>
    </location>
</feature>
<feature type="chain" id="PRO_0000413701" description="Succinate--CoA ligase [ADP-forming] subunit beta, mitochondrial">
    <location>
        <begin position="3"/>
        <end position="413"/>
    </location>
</feature>
<feature type="domain" description="ATP-grasp" evidence="2">
    <location>
        <begin position="11"/>
        <end position="238"/>
    </location>
</feature>
<feature type="binding site" evidence="2">
    <location>
        <position position="48"/>
    </location>
    <ligand>
        <name>ATP</name>
        <dbReference type="ChEBI" id="CHEBI:30616"/>
    </ligand>
</feature>
<feature type="binding site" evidence="2">
    <location>
        <begin position="55"/>
        <end position="57"/>
    </location>
    <ligand>
        <name>ATP</name>
        <dbReference type="ChEBI" id="CHEBI:30616"/>
    </ligand>
</feature>
<feature type="binding site" evidence="2">
    <location>
        <position position="208"/>
    </location>
    <ligand>
        <name>Mg(2+)</name>
        <dbReference type="ChEBI" id="CHEBI:18420"/>
    </ligand>
</feature>
<feature type="binding site" evidence="2">
    <location>
        <position position="222"/>
    </location>
    <ligand>
        <name>Mg(2+)</name>
        <dbReference type="ChEBI" id="CHEBI:18420"/>
    </ligand>
</feature>
<feature type="binding site" evidence="2">
    <location>
        <position position="273"/>
    </location>
    <ligand>
        <name>substrate</name>
        <note>ligand shared with subunit alpha</note>
    </ligand>
</feature>
<feature type="binding site" evidence="2">
    <location>
        <begin position="330"/>
        <end position="332"/>
    </location>
    <ligand>
        <name>substrate</name>
        <note>ligand shared with subunit alpha</note>
    </ligand>
</feature>
<feature type="site" description="Important for substrate specificity" evidence="2">
    <location>
        <position position="44"/>
    </location>
</feature>
<feature type="site" description="Important for substrate specificity" evidence="2">
    <location>
        <position position="112"/>
    </location>
</feature>
<feature type="non-terminal residue">
    <location>
        <position position="1"/>
    </location>
</feature>
<dbReference type="EC" id="6.2.1.5" evidence="2 3"/>
<dbReference type="EMBL" id="AF043540">
    <property type="protein sequence ID" value="AAC69705.1"/>
    <property type="molecule type" value="mRNA"/>
</dbReference>
<dbReference type="SMR" id="Q9YI37"/>
<dbReference type="eggNOG" id="KOG2799">
    <property type="taxonomic scope" value="Eukaryota"/>
</dbReference>
<dbReference type="SABIO-RK" id="Q9YI37"/>
<dbReference type="UniPathway" id="UPA00223">
    <property type="reaction ID" value="UER00999"/>
</dbReference>
<dbReference type="GO" id="GO:0005739">
    <property type="term" value="C:mitochondrion"/>
    <property type="evidence" value="ECO:0007669"/>
    <property type="project" value="UniProtKB-SubCell"/>
</dbReference>
<dbReference type="GO" id="GO:0042709">
    <property type="term" value="C:succinate-CoA ligase complex"/>
    <property type="evidence" value="ECO:0007669"/>
    <property type="project" value="TreeGrafter"/>
</dbReference>
<dbReference type="GO" id="GO:0005524">
    <property type="term" value="F:ATP binding"/>
    <property type="evidence" value="ECO:0007669"/>
    <property type="project" value="UniProtKB-KW"/>
</dbReference>
<dbReference type="GO" id="GO:0046872">
    <property type="term" value="F:metal ion binding"/>
    <property type="evidence" value="ECO:0007669"/>
    <property type="project" value="UniProtKB-KW"/>
</dbReference>
<dbReference type="GO" id="GO:0004775">
    <property type="term" value="F:succinate-CoA ligase (ADP-forming) activity"/>
    <property type="evidence" value="ECO:0007669"/>
    <property type="project" value="UniProtKB-EC"/>
</dbReference>
<dbReference type="GO" id="GO:0006104">
    <property type="term" value="P:succinyl-CoA metabolic process"/>
    <property type="evidence" value="ECO:0007669"/>
    <property type="project" value="TreeGrafter"/>
</dbReference>
<dbReference type="GO" id="GO:0006099">
    <property type="term" value="P:tricarboxylic acid cycle"/>
    <property type="evidence" value="ECO:0007669"/>
    <property type="project" value="UniProtKB-UniPathway"/>
</dbReference>
<dbReference type="FunFam" id="3.30.470.20:FF:000002">
    <property type="entry name" value="Succinate--CoA ligase [ADP-forming] subunit beta"/>
    <property type="match status" value="1"/>
</dbReference>
<dbReference type="FunFam" id="3.40.50.261:FF:000001">
    <property type="entry name" value="Succinate--CoA ligase [ADP-forming] subunit beta"/>
    <property type="match status" value="1"/>
</dbReference>
<dbReference type="FunFam" id="3.30.1490.20:FF:000040">
    <property type="entry name" value="Succinate--CoA ligase [ADP-forming] subunit beta mitochondrial"/>
    <property type="match status" value="1"/>
</dbReference>
<dbReference type="Gene3D" id="3.30.1490.20">
    <property type="entry name" value="ATP-grasp fold, A domain"/>
    <property type="match status" value="1"/>
</dbReference>
<dbReference type="Gene3D" id="3.30.470.20">
    <property type="entry name" value="ATP-grasp fold, B domain"/>
    <property type="match status" value="1"/>
</dbReference>
<dbReference type="Gene3D" id="3.40.50.261">
    <property type="entry name" value="Succinyl-CoA synthetase domains"/>
    <property type="match status" value="1"/>
</dbReference>
<dbReference type="HAMAP" id="MF_00558">
    <property type="entry name" value="Succ_CoA_beta"/>
    <property type="match status" value="1"/>
</dbReference>
<dbReference type="HAMAP" id="MF_03220">
    <property type="entry name" value="Succ_CoA_betaA_euk"/>
    <property type="match status" value="1"/>
</dbReference>
<dbReference type="InterPro" id="IPR011761">
    <property type="entry name" value="ATP-grasp"/>
</dbReference>
<dbReference type="InterPro" id="IPR013650">
    <property type="entry name" value="ATP-grasp_succ-CoA_synth-type"/>
</dbReference>
<dbReference type="InterPro" id="IPR013815">
    <property type="entry name" value="ATP_grasp_subdomain_1"/>
</dbReference>
<dbReference type="InterPro" id="IPR017866">
    <property type="entry name" value="Succ-CoA_synthase_bsu_CS"/>
</dbReference>
<dbReference type="InterPro" id="IPR005811">
    <property type="entry name" value="SUCC_ACL_C"/>
</dbReference>
<dbReference type="InterPro" id="IPR034723">
    <property type="entry name" value="Succ_CoA_betaA_euk"/>
</dbReference>
<dbReference type="InterPro" id="IPR005809">
    <property type="entry name" value="Succ_CoA_ligase-like_bsu"/>
</dbReference>
<dbReference type="InterPro" id="IPR016102">
    <property type="entry name" value="Succinyl-CoA_synth-like"/>
</dbReference>
<dbReference type="NCBIfam" id="NF001913">
    <property type="entry name" value="PRK00696.1"/>
    <property type="match status" value="1"/>
</dbReference>
<dbReference type="NCBIfam" id="TIGR01016">
    <property type="entry name" value="sucCoAbeta"/>
    <property type="match status" value="1"/>
</dbReference>
<dbReference type="PANTHER" id="PTHR11815:SF1">
    <property type="entry name" value="SUCCINATE--COA LIGASE [ADP-FORMING] SUBUNIT BETA, MITOCHONDRIAL"/>
    <property type="match status" value="1"/>
</dbReference>
<dbReference type="PANTHER" id="PTHR11815">
    <property type="entry name" value="SUCCINYL-COA SYNTHETASE BETA CHAIN"/>
    <property type="match status" value="1"/>
</dbReference>
<dbReference type="Pfam" id="PF08442">
    <property type="entry name" value="ATP-grasp_2"/>
    <property type="match status" value="1"/>
</dbReference>
<dbReference type="Pfam" id="PF00549">
    <property type="entry name" value="Ligase_CoA"/>
    <property type="match status" value="1"/>
</dbReference>
<dbReference type="PIRSF" id="PIRSF001554">
    <property type="entry name" value="SucCS_beta"/>
    <property type="match status" value="1"/>
</dbReference>
<dbReference type="SUPFAM" id="SSF56059">
    <property type="entry name" value="Glutathione synthetase ATP-binding domain-like"/>
    <property type="match status" value="1"/>
</dbReference>
<dbReference type="SUPFAM" id="SSF52210">
    <property type="entry name" value="Succinyl-CoA synthetase domains"/>
    <property type="match status" value="1"/>
</dbReference>
<dbReference type="PROSITE" id="PS50975">
    <property type="entry name" value="ATP_GRASP"/>
    <property type="match status" value="1"/>
</dbReference>
<dbReference type="PROSITE" id="PS01217">
    <property type="entry name" value="SUCCINYL_COA_LIG_3"/>
    <property type="match status" value="1"/>
</dbReference>
<evidence type="ECO:0000250" key="1"/>
<evidence type="ECO:0000255" key="2">
    <source>
        <dbReference type="HAMAP-Rule" id="MF_03220"/>
    </source>
</evidence>
<evidence type="ECO:0000269" key="3">
    <source>
    </source>
</evidence>
<evidence type="ECO:0000269" key="4">
    <source>
    </source>
</evidence>
<evidence type="ECO:0000305" key="5">
    <source>
    </source>
</evidence>
<protein>
    <recommendedName>
        <fullName evidence="2">Succinate--CoA ligase [ADP-forming] subunit beta, mitochondrial</fullName>
        <ecNumber evidence="2 3">6.2.1.5</ecNumber>
    </recommendedName>
    <alternativeName>
        <fullName evidence="2">ATP-specific succinyl-CoA synthetase subunit beta</fullName>
        <shortName evidence="2">A-SCS</shortName>
    </alternativeName>
    <alternativeName>
        <fullName evidence="2">Succinyl-CoA synthetase beta-A chain</fullName>
        <shortName evidence="2">SCS-betaA</shortName>
    </alternativeName>
</protein>
<comment type="function">
    <text evidence="2 3">ATP-specific succinyl-CoA synthetase functions in the citric acid cycle (TCA), coupling the hydrolysis of succinyl-CoA to the synthesis of ATP and thus represents the only step of substrate-level phosphorylation in the TCA. The beta subunit provides nucleotide specificity of the enzyme and binds the substrate succinate, while the binding sites for coenzyme A and phosphate are found in the alpha subunit.</text>
</comment>
<comment type="catalytic activity">
    <reaction evidence="2 3">
        <text>succinate + ATP + CoA = succinyl-CoA + ADP + phosphate</text>
        <dbReference type="Rhea" id="RHEA:17661"/>
        <dbReference type="ChEBI" id="CHEBI:30031"/>
        <dbReference type="ChEBI" id="CHEBI:30616"/>
        <dbReference type="ChEBI" id="CHEBI:43474"/>
        <dbReference type="ChEBI" id="CHEBI:57287"/>
        <dbReference type="ChEBI" id="CHEBI:57292"/>
        <dbReference type="ChEBI" id="CHEBI:456216"/>
        <dbReference type="EC" id="6.2.1.5"/>
    </reaction>
</comment>
<comment type="cofactor">
    <cofactor evidence="2">
        <name>Mg(2+)</name>
        <dbReference type="ChEBI" id="CHEBI:18420"/>
    </cofactor>
    <text evidence="2">Binds 1 Mg(2+) ion per subunit.</text>
</comment>
<comment type="biophysicochemical properties">
    <kinetics>
        <KM evidence="3">0.055 mM for ATP</KM>
        <KM evidence="3">0.25 mM for ADP</KM>
    </kinetics>
</comment>
<comment type="pathway">
    <text evidence="2 5">Carbohydrate metabolism; tricarboxylic acid cycle; succinate from succinyl-CoA (ligase route): step 1/1.</text>
</comment>
<comment type="subunit">
    <text evidence="2 3">Heterodimer of an alpha and a beta subunit. The beta subunit determines specificity for ATP.</text>
</comment>
<comment type="subcellular location">
    <subcellularLocation>
        <location evidence="2 3">Mitochondrion</location>
    </subcellularLocation>
</comment>
<comment type="tissue specificity">
    <text evidence="4">Widely expressed. Not present in liver.</text>
</comment>
<comment type="similarity">
    <text evidence="2">Belongs to the succinate/malate CoA ligase beta subunit family. ATP-specific subunit beta subfamily.</text>
</comment>